<proteinExistence type="evidence at transcript level"/>
<dbReference type="EC" id="4.6.1.16"/>
<dbReference type="EMBL" id="AK003757">
    <property type="protein sequence ID" value="BAC25051.1"/>
    <property type="molecule type" value="mRNA"/>
</dbReference>
<dbReference type="EMBL" id="AK013253">
    <property type="protein sequence ID" value="BAB28747.1"/>
    <property type="molecule type" value="mRNA"/>
</dbReference>
<dbReference type="EMBL" id="AK053916">
    <property type="protein sequence ID" value="BAC35591.1"/>
    <property type="molecule type" value="mRNA"/>
</dbReference>
<dbReference type="EMBL" id="BC002205">
    <property type="protein sequence ID" value="AAH02205.1"/>
    <property type="molecule type" value="mRNA"/>
</dbReference>
<dbReference type="EMBL" id="BC091756">
    <property type="protein sequence ID" value="AAH91756.1"/>
    <property type="molecule type" value="mRNA"/>
</dbReference>
<dbReference type="CCDS" id="CCDS20725.1">
    <molecule id="Q8BMZ5-1"/>
</dbReference>
<dbReference type="CCDS" id="CCDS51966.1">
    <molecule id="Q8BMZ5-2"/>
</dbReference>
<dbReference type="RefSeq" id="NP_001157676.1">
    <molecule id="Q8BMZ5-1"/>
    <property type="nucleotide sequence ID" value="NM_001164204.2"/>
</dbReference>
<dbReference type="RefSeq" id="NP_001157677.1">
    <molecule id="Q8BMZ5-2"/>
    <property type="nucleotide sequence ID" value="NM_001164205.2"/>
</dbReference>
<dbReference type="RefSeq" id="NP_001406982.1">
    <molecule id="Q8BMZ5-1"/>
    <property type="nucleotide sequence ID" value="NM_001420053.1"/>
</dbReference>
<dbReference type="RefSeq" id="NP_001406983.1">
    <molecule id="Q8BMZ5-1"/>
    <property type="nucleotide sequence ID" value="NM_001420054.1"/>
</dbReference>
<dbReference type="RefSeq" id="NP_077130.1">
    <molecule id="Q8BMZ5-1"/>
    <property type="nucleotide sequence ID" value="NM_024168.3"/>
</dbReference>
<dbReference type="RefSeq" id="XP_017167711.1">
    <property type="nucleotide sequence ID" value="XM_017312222.1"/>
</dbReference>
<dbReference type="RefSeq" id="XP_017167712.1">
    <property type="nucleotide sequence ID" value="XM_017312223.1"/>
</dbReference>
<dbReference type="RefSeq" id="XP_017167713.1">
    <molecule id="Q8BMZ5-1"/>
    <property type="nucleotide sequence ID" value="XM_017312224.3"/>
</dbReference>
<dbReference type="RefSeq" id="XP_017167714.1">
    <molecule id="Q8BMZ5-1"/>
    <property type="nucleotide sequence ID" value="XM_017312225.3"/>
</dbReference>
<dbReference type="RefSeq" id="XP_017167715.1">
    <molecule id="Q8BMZ5-1"/>
    <property type="nucleotide sequence ID" value="XM_017312226.3"/>
</dbReference>
<dbReference type="SMR" id="Q8BMZ5"/>
<dbReference type="BioGRID" id="211199">
    <property type="interactions" value="1"/>
</dbReference>
<dbReference type="FunCoup" id="Q8BMZ5">
    <property type="interactions" value="1034"/>
</dbReference>
<dbReference type="IntAct" id="Q8BMZ5">
    <property type="interactions" value="1"/>
</dbReference>
<dbReference type="MINT" id="Q8BMZ5"/>
<dbReference type="STRING" id="10090.ENSMUSP00000104270"/>
<dbReference type="iPTMnet" id="Q8BMZ5"/>
<dbReference type="PhosphoSitePlus" id="Q8BMZ5"/>
<dbReference type="PaxDb" id="10090-ENSMUSP00000104270"/>
<dbReference type="PeptideAtlas" id="Q8BMZ5"/>
<dbReference type="ProteomicsDB" id="256956">
    <molecule id="Q8BMZ5-1"/>
</dbReference>
<dbReference type="ProteomicsDB" id="256957">
    <molecule id="Q8BMZ5-2"/>
</dbReference>
<dbReference type="Pumba" id="Q8BMZ5"/>
<dbReference type="Antibodypedia" id="32835">
    <property type="antibodies" value="41 antibodies from 13 providers"/>
</dbReference>
<dbReference type="DNASU" id="66078"/>
<dbReference type="Ensembl" id="ENSMUST00000108627.4">
    <molecule id="Q8BMZ5-1"/>
    <property type="protein sequence ID" value="ENSMUSP00000104267.4"/>
    <property type="gene ID" value="ENSMUSG00000035585.17"/>
</dbReference>
<dbReference type="Ensembl" id="ENSMUST00000108629.8">
    <molecule id="Q8BMZ5-2"/>
    <property type="protein sequence ID" value="ENSMUSP00000104269.2"/>
    <property type="gene ID" value="ENSMUSG00000035585.17"/>
</dbReference>
<dbReference type="Ensembl" id="ENSMUST00000108630.8">
    <molecule id="Q8BMZ5-1"/>
    <property type="protein sequence ID" value="ENSMUSP00000104270.2"/>
    <property type="gene ID" value="ENSMUSG00000035585.17"/>
</dbReference>
<dbReference type="GeneID" id="66078"/>
<dbReference type="KEGG" id="mmu:66078"/>
<dbReference type="UCSC" id="uc009evu.2">
    <molecule id="Q8BMZ5-2"/>
    <property type="organism name" value="mouse"/>
</dbReference>
<dbReference type="UCSC" id="uc009evv.2">
    <molecule id="Q8BMZ5-1"/>
    <property type="organism name" value="mouse"/>
</dbReference>
<dbReference type="AGR" id="MGI:1913328"/>
<dbReference type="CTD" id="79042"/>
<dbReference type="MGI" id="MGI:1913328">
    <property type="gene designation" value="Tsen34"/>
</dbReference>
<dbReference type="VEuPathDB" id="HostDB:ENSMUSG00000035585"/>
<dbReference type="eggNOG" id="KOG4133">
    <property type="taxonomic scope" value="Eukaryota"/>
</dbReference>
<dbReference type="GeneTree" id="ENSGT00390000003912"/>
<dbReference type="InParanoid" id="Q8BMZ5"/>
<dbReference type="OrthoDB" id="48041at2759"/>
<dbReference type="PhylomeDB" id="Q8BMZ5"/>
<dbReference type="TreeFam" id="TF314631"/>
<dbReference type="BioGRID-ORCS" id="66078">
    <property type="hits" value="22 hits in 80 CRISPR screens"/>
</dbReference>
<dbReference type="ChiTaRS" id="Tsen34">
    <property type="organism name" value="mouse"/>
</dbReference>
<dbReference type="PRO" id="PR:Q8BMZ5"/>
<dbReference type="Proteomes" id="UP000000589">
    <property type="component" value="Chromosome 7"/>
</dbReference>
<dbReference type="RNAct" id="Q8BMZ5">
    <property type="molecule type" value="protein"/>
</dbReference>
<dbReference type="Bgee" id="ENSMUSG00000035585">
    <property type="expression patterns" value="Expressed in embryonic facial prominence and 65 other cell types or tissues"/>
</dbReference>
<dbReference type="ExpressionAtlas" id="Q8BMZ5">
    <property type="expression patterns" value="baseline and differential"/>
</dbReference>
<dbReference type="GO" id="GO:0005730">
    <property type="term" value="C:nucleolus"/>
    <property type="evidence" value="ECO:0007669"/>
    <property type="project" value="UniProtKB-SubCell"/>
</dbReference>
<dbReference type="GO" id="GO:0005654">
    <property type="term" value="C:nucleoplasm"/>
    <property type="evidence" value="ECO:0007669"/>
    <property type="project" value="Ensembl"/>
</dbReference>
<dbReference type="GO" id="GO:0000214">
    <property type="term" value="C:tRNA-intron endonuclease complex"/>
    <property type="evidence" value="ECO:0007669"/>
    <property type="project" value="InterPro"/>
</dbReference>
<dbReference type="GO" id="GO:0016829">
    <property type="term" value="F:lyase activity"/>
    <property type="evidence" value="ECO:0007669"/>
    <property type="project" value="UniProtKB-KW"/>
</dbReference>
<dbReference type="GO" id="GO:0003676">
    <property type="term" value="F:nucleic acid binding"/>
    <property type="evidence" value="ECO:0007669"/>
    <property type="project" value="InterPro"/>
</dbReference>
<dbReference type="GO" id="GO:0000213">
    <property type="term" value="F:tRNA-intron endonuclease activity"/>
    <property type="evidence" value="ECO:0007669"/>
    <property type="project" value="UniProtKB-EC"/>
</dbReference>
<dbReference type="GO" id="GO:0006397">
    <property type="term" value="P:mRNA processing"/>
    <property type="evidence" value="ECO:0007669"/>
    <property type="project" value="UniProtKB-KW"/>
</dbReference>
<dbReference type="GO" id="GO:0000379">
    <property type="term" value="P:tRNA-type intron splice site recognition and cleavage"/>
    <property type="evidence" value="ECO:0007669"/>
    <property type="project" value="InterPro"/>
</dbReference>
<dbReference type="CDD" id="cd22363">
    <property type="entry name" value="tRNA-intron_lyase_C"/>
    <property type="match status" value="1"/>
</dbReference>
<dbReference type="FunFam" id="3.40.1350.10:FF:000002">
    <property type="entry name" value="tRNA-splicing endonuclease subunit Sen34"/>
    <property type="match status" value="1"/>
</dbReference>
<dbReference type="Gene3D" id="3.40.1350.10">
    <property type="match status" value="1"/>
</dbReference>
<dbReference type="InterPro" id="IPR011856">
    <property type="entry name" value="tRNA_endonuc-like_dom_sf"/>
</dbReference>
<dbReference type="InterPro" id="IPR036167">
    <property type="entry name" value="tRNA_intron_Endo_cat-like_sf"/>
</dbReference>
<dbReference type="InterPro" id="IPR006677">
    <property type="entry name" value="tRNA_intron_Endonuc_cat-like"/>
</dbReference>
<dbReference type="InterPro" id="IPR006676">
    <property type="entry name" value="tRNA_splic"/>
</dbReference>
<dbReference type="InterPro" id="IPR016690">
    <property type="entry name" value="tRNA_splic_SEN34"/>
</dbReference>
<dbReference type="NCBIfam" id="TIGR00324">
    <property type="entry name" value="endA"/>
    <property type="match status" value="1"/>
</dbReference>
<dbReference type="PANTHER" id="PTHR13070:SF0">
    <property type="entry name" value="TRNA-SPLICING ENDONUCLEASE SUBUNIT SEN34"/>
    <property type="match status" value="1"/>
</dbReference>
<dbReference type="PANTHER" id="PTHR13070">
    <property type="entry name" value="TRNA-SPLICING ENDONUCLEASE SUBUNIT SEN34-RELATED"/>
    <property type="match status" value="1"/>
</dbReference>
<dbReference type="Pfam" id="PF01974">
    <property type="entry name" value="tRNA_int_endo"/>
    <property type="match status" value="1"/>
</dbReference>
<dbReference type="PIRSF" id="PIRSF017250">
    <property type="entry name" value="tRNA_splic_SEN34"/>
    <property type="match status" value="1"/>
</dbReference>
<dbReference type="SUPFAM" id="SSF53032">
    <property type="entry name" value="tRNA-intron endonuclease catalytic domain-like"/>
    <property type="match status" value="1"/>
</dbReference>
<feature type="chain" id="PRO_0000109464" description="tRNA-splicing endonuclease subunit Sen34">
    <location>
        <begin position="1"/>
        <end position="316"/>
    </location>
</feature>
<feature type="region of interest" description="Disordered" evidence="2">
    <location>
        <begin position="120"/>
        <end position="184"/>
    </location>
</feature>
<feature type="compositionally biased region" description="Polar residues" evidence="2">
    <location>
        <begin position="144"/>
        <end position="159"/>
    </location>
</feature>
<feature type="compositionally biased region" description="Polar residues" evidence="2">
    <location>
        <begin position="168"/>
        <end position="181"/>
    </location>
</feature>
<feature type="active site" evidence="1">
    <location>
        <position position="253"/>
    </location>
</feature>
<feature type="active site" evidence="1">
    <location>
        <position position="261"/>
    </location>
</feature>
<feature type="active site" evidence="1">
    <location>
        <position position="292"/>
    </location>
</feature>
<feature type="splice variant" id="VSP_010987" description="In isoform 2." evidence="3">
    <location>
        <begin position="255"/>
        <end position="283"/>
    </location>
</feature>
<feature type="sequence conflict" description="In Ref. 1; BAB28747." evidence="4" ref="1">
    <original>Q</original>
    <variation>L</variation>
    <location>
        <position position="20"/>
    </location>
</feature>
<feature type="sequence conflict" description="In Ref. 1; BAB28747." evidence="4" ref="1">
    <original>L</original>
    <variation>Q</variation>
    <location>
        <position position="280"/>
    </location>
</feature>
<sequence>MLVVEVANGRSLVWGAEAVQALRERLGVGGRTVGALPRGPRQNSRLGLPLLLLPEEARLLAEIGAVTLVSAPRPDPRNHGLALASFKRQQEQSFQDQNTLAAEARETRRQELLEKIVEGQAAKKQKLEQDSGADEGGQEAGGSEATQGSETSDDGQPSAEQEGAAPSLDSSSPQPGPSNGVTPLPRSALLIQLATARPRPVKAKPLDWRVQSKDWPHAGRPAHELRYSIYRDLWERGFFLSAAGKFGGDFLVYPGDPLRFHAHYIAQCWSAEDPIPLQDLVSAGRLGTSVRKTLLLCSPQPDGKVVYTSLQWASLQ</sequence>
<organism>
    <name type="scientific">Mus musculus</name>
    <name type="common">Mouse</name>
    <dbReference type="NCBI Taxonomy" id="10090"/>
    <lineage>
        <taxon>Eukaryota</taxon>
        <taxon>Metazoa</taxon>
        <taxon>Chordata</taxon>
        <taxon>Craniata</taxon>
        <taxon>Vertebrata</taxon>
        <taxon>Euteleostomi</taxon>
        <taxon>Mammalia</taxon>
        <taxon>Eutheria</taxon>
        <taxon>Euarchontoglires</taxon>
        <taxon>Glires</taxon>
        <taxon>Rodentia</taxon>
        <taxon>Myomorpha</taxon>
        <taxon>Muroidea</taxon>
        <taxon>Muridae</taxon>
        <taxon>Murinae</taxon>
        <taxon>Mus</taxon>
        <taxon>Mus</taxon>
    </lineage>
</organism>
<protein>
    <recommendedName>
        <fullName>tRNA-splicing endonuclease subunit Sen34</fullName>
        <ecNumber>4.6.1.16</ecNumber>
    </recommendedName>
    <alternativeName>
        <fullName>Leukocyte receptor cluster member 5 homolog</fullName>
    </alternativeName>
    <alternativeName>
        <fullName>tRNA-intron endonuclease Sen34</fullName>
    </alternativeName>
</protein>
<evidence type="ECO:0000250" key="1"/>
<evidence type="ECO:0000256" key="2">
    <source>
        <dbReference type="SAM" id="MobiDB-lite"/>
    </source>
</evidence>
<evidence type="ECO:0000303" key="3">
    <source>
    </source>
</evidence>
<evidence type="ECO:0000305" key="4"/>
<comment type="function">
    <text evidence="1">Constitutes one of the two catalytic subunit of the tRNA-splicing endonuclease complex, a complex responsible for identification and cleavage of the splice sites in pre-tRNA. It cleaves pre-tRNA at the 5'- and 3'-splice sites to release the intron. The products are an intron and two tRNA half-molecules bearing 2',3'-cyclic phosphate and 5'-OH termini. There are no conserved sequences at the splice sites, but the intron is invariably located at the same site in the gene, placing the splice sites an invariant distance from the constant structural features of the tRNA body. The tRNA splicing endonuclease is also involved in mRNA processing via its association with pre-mRNA 3'-end processing factors, establishing a link between pre-tRNA splicing and pre-mRNA 3'-end formation, suggesting that the endonuclease subunits function in multiple RNA-processing events (By similarity).</text>
</comment>
<comment type="catalytic activity">
    <reaction>
        <text>pretRNA = a 3'-half-tRNA molecule with a 5'-OH end + a 5'-half-tRNA molecule with a 2',3'-cyclic phosphate end + an intron with a 2',3'-cyclic phosphate and a 5'-hydroxyl terminus.</text>
        <dbReference type="EC" id="4.6.1.16"/>
    </reaction>
</comment>
<comment type="subunit">
    <text evidence="1">tRNA splicing endonuclease is a heterotetramer composed of TSEN2, TSEN15, TSEN34/LENG5 and TSEN54. tRNA splicing endonuclease complex also contains proteins of the pre-mRNA 3'-end processing machinery such as CLP1, CPSF1, CPSF4 and CSTF2 (By similarity).</text>
</comment>
<comment type="subcellular location">
    <subcellularLocation>
        <location evidence="1">Nucleus</location>
    </subcellularLocation>
    <subcellularLocation>
        <location evidence="1">Nucleus</location>
        <location evidence="1">Nucleolus</location>
    </subcellularLocation>
    <text evidence="1">May be transiently localized in the nucleolus.</text>
</comment>
<comment type="alternative products">
    <event type="alternative splicing"/>
    <isoform>
        <id>Q8BMZ5-1</id>
        <name>1</name>
        <sequence type="displayed"/>
    </isoform>
    <isoform>
        <id>Q8BMZ5-2</id>
        <name>2</name>
        <sequence type="described" ref="VSP_010987"/>
    </isoform>
</comment>
<comment type="similarity">
    <text evidence="4">Belongs to the tRNA-intron endonuclease family.</text>
</comment>
<reference key="1">
    <citation type="journal article" date="2005" name="Science">
        <title>The transcriptional landscape of the mammalian genome.</title>
        <authorList>
            <person name="Carninci P."/>
            <person name="Kasukawa T."/>
            <person name="Katayama S."/>
            <person name="Gough J."/>
            <person name="Frith M.C."/>
            <person name="Maeda N."/>
            <person name="Oyama R."/>
            <person name="Ravasi T."/>
            <person name="Lenhard B."/>
            <person name="Wells C."/>
            <person name="Kodzius R."/>
            <person name="Shimokawa K."/>
            <person name="Bajic V.B."/>
            <person name="Brenner S.E."/>
            <person name="Batalov S."/>
            <person name="Forrest A.R."/>
            <person name="Zavolan M."/>
            <person name="Davis M.J."/>
            <person name="Wilming L.G."/>
            <person name="Aidinis V."/>
            <person name="Allen J.E."/>
            <person name="Ambesi-Impiombato A."/>
            <person name="Apweiler R."/>
            <person name="Aturaliya R.N."/>
            <person name="Bailey T.L."/>
            <person name="Bansal M."/>
            <person name="Baxter L."/>
            <person name="Beisel K.W."/>
            <person name="Bersano T."/>
            <person name="Bono H."/>
            <person name="Chalk A.M."/>
            <person name="Chiu K.P."/>
            <person name="Choudhary V."/>
            <person name="Christoffels A."/>
            <person name="Clutterbuck D.R."/>
            <person name="Crowe M.L."/>
            <person name="Dalla E."/>
            <person name="Dalrymple B.P."/>
            <person name="de Bono B."/>
            <person name="Della Gatta G."/>
            <person name="di Bernardo D."/>
            <person name="Down T."/>
            <person name="Engstrom P."/>
            <person name="Fagiolini M."/>
            <person name="Faulkner G."/>
            <person name="Fletcher C.F."/>
            <person name="Fukushima T."/>
            <person name="Furuno M."/>
            <person name="Futaki S."/>
            <person name="Gariboldi M."/>
            <person name="Georgii-Hemming P."/>
            <person name="Gingeras T.R."/>
            <person name="Gojobori T."/>
            <person name="Green R.E."/>
            <person name="Gustincich S."/>
            <person name="Harbers M."/>
            <person name="Hayashi Y."/>
            <person name="Hensch T.K."/>
            <person name="Hirokawa N."/>
            <person name="Hill D."/>
            <person name="Huminiecki L."/>
            <person name="Iacono M."/>
            <person name="Ikeo K."/>
            <person name="Iwama A."/>
            <person name="Ishikawa T."/>
            <person name="Jakt M."/>
            <person name="Kanapin A."/>
            <person name="Katoh M."/>
            <person name="Kawasawa Y."/>
            <person name="Kelso J."/>
            <person name="Kitamura H."/>
            <person name="Kitano H."/>
            <person name="Kollias G."/>
            <person name="Krishnan S.P."/>
            <person name="Kruger A."/>
            <person name="Kummerfeld S.K."/>
            <person name="Kurochkin I.V."/>
            <person name="Lareau L.F."/>
            <person name="Lazarevic D."/>
            <person name="Lipovich L."/>
            <person name="Liu J."/>
            <person name="Liuni S."/>
            <person name="McWilliam S."/>
            <person name="Madan Babu M."/>
            <person name="Madera M."/>
            <person name="Marchionni L."/>
            <person name="Matsuda H."/>
            <person name="Matsuzawa S."/>
            <person name="Miki H."/>
            <person name="Mignone F."/>
            <person name="Miyake S."/>
            <person name="Morris K."/>
            <person name="Mottagui-Tabar S."/>
            <person name="Mulder N."/>
            <person name="Nakano N."/>
            <person name="Nakauchi H."/>
            <person name="Ng P."/>
            <person name="Nilsson R."/>
            <person name="Nishiguchi S."/>
            <person name="Nishikawa S."/>
            <person name="Nori F."/>
            <person name="Ohara O."/>
            <person name="Okazaki Y."/>
            <person name="Orlando V."/>
            <person name="Pang K.C."/>
            <person name="Pavan W.J."/>
            <person name="Pavesi G."/>
            <person name="Pesole G."/>
            <person name="Petrovsky N."/>
            <person name="Piazza S."/>
            <person name="Reed J."/>
            <person name="Reid J.F."/>
            <person name="Ring B.Z."/>
            <person name="Ringwald M."/>
            <person name="Rost B."/>
            <person name="Ruan Y."/>
            <person name="Salzberg S.L."/>
            <person name="Sandelin A."/>
            <person name="Schneider C."/>
            <person name="Schoenbach C."/>
            <person name="Sekiguchi K."/>
            <person name="Semple C.A."/>
            <person name="Seno S."/>
            <person name="Sessa L."/>
            <person name="Sheng Y."/>
            <person name="Shibata Y."/>
            <person name="Shimada H."/>
            <person name="Shimada K."/>
            <person name="Silva D."/>
            <person name="Sinclair B."/>
            <person name="Sperling S."/>
            <person name="Stupka E."/>
            <person name="Sugiura K."/>
            <person name="Sultana R."/>
            <person name="Takenaka Y."/>
            <person name="Taki K."/>
            <person name="Tammoja K."/>
            <person name="Tan S.L."/>
            <person name="Tang S."/>
            <person name="Taylor M.S."/>
            <person name="Tegner J."/>
            <person name="Teichmann S.A."/>
            <person name="Ueda H.R."/>
            <person name="van Nimwegen E."/>
            <person name="Verardo R."/>
            <person name="Wei C.L."/>
            <person name="Yagi K."/>
            <person name="Yamanishi H."/>
            <person name="Zabarovsky E."/>
            <person name="Zhu S."/>
            <person name="Zimmer A."/>
            <person name="Hide W."/>
            <person name="Bult C."/>
            <person name="Grimmond S.M."/>
            <person name="Teasdale R.D."/>
            <person name="Liu E.T."/>
            <person name="Brusic V."/>
            <person name="Quackenbush J."/>
            <person name="Wahlestedt C."/>
            <person name="Mattick J.S."/>
            <person name="Hume D.A."/>
            <person name="Kai C."/>
            <person name="Sasaki D."/>
            <person name="Tomaru Y."/>
            <person name="Fukuda S."/>
            <person name="Kanamori-Katayama M."/>
            <person name="Suzuki M."/>
            <person name="Aoki J."/>
            <person name="Arakawa T."/>
            <person name="Iida J."/>
            <person name="Imamura K."/>
            <person name="Itoh M."/>
            <person name="Kato T."/>
            <person name="Kawaji H."/>
            <person name="Kawagashira N."/>
            <person name="Kawashima T."/>
            <person name="Kojima M."/>
            <person name="Kondo S."/>
            <person name="Konno H."/>
            <person name="Nakano K."/>
            <person name="Ninomiya N."/>
            <person name="Nishio T."/>
            <person name="Okada M."/>
            <person name="Plessy C."/>
            <person name="Shibata K."/>
            <person name="Shiraki T."/>
            <person name="Suzuki S."/>
            <person name="Tagami M."/>
            <person name="Waki K."/>
            <person name="Watahiki A."/>
            <person name="Okamura-Oho Y."/>
            <person name="Suzuki H."/>
            <person name="Kawai J."/>
            <person name="Hayashizaki Y."/>
        </authorList>
    </citation>
    <scope>NUCLEOTIDE SEQUENCE [LARGE SCALE MRNA] (ISOFORMS 1 AND 2)</scope>
    <source>
        <strain>C57BL/6J</strain>
        <tissue>Embryo</tissue>
        <tissue>Oviduct</tissue>
    </source>
</reference>
<reference key="2">
    <citation type="journal article" date="2004" name="Genome Res.">
        <title>The status, quality, and expansion of the NIH full-length cDNA project: the Mammalian Gene Collection (MGC).</title>
        <authorList>
            <consortium name="The MGC Project Team"/>
        </authorList>
    </citation>
    <scope>NUCLEOTIDE SEQUENCE [LARGE SCALE MRNA] (ISOFORM 1)</scope>
    <source>
        <strain>FVB/N</strain>
        <tissue>Salivary gland</tissue>
    </source>
</reference>
<keyword id="KW-0025">Alternative splicing</keyword>
<keyword id="KW-0456">Lyase</keyword>
<keyword id="KW-0507">mRNA processing</keyword>
<keyword id="KW-0539">Nucleus</keyword>
<keyword id="KW-1185">Reference proteome</keyword>
<keyword id="KW-0819">tRNA processing</keyword>
<name>SEN34_MOUSE</name>
<accession>Q8BMZ5</accession>
<accession>Q58EU2</accession>
<accession>Q99LV6</accession>
<accession>Q9CYW1</accession>
<gene>
    <name type="primary">Tsen34</name>
    <name type="synonym">Leng5</name>
    <name type="synonym">Sen34</name>
</gene>